<proteinExistence type="inferred from homology"/>
<evidence type="ECO:0000255" key="1">
    <source>
        <dbReference type="HAMAP-Rule" id="MF_00064"/>
    </source>
</evidence>
<organism>
    <name type="scientific">Marinobacter nauticus (strain ATCC 700491 / DSM 11845 / VT8)</name>
    <name type="common">Marinobacter aquaeolei</name>
    <dbReference type="NCBI Taxonomy" id="351348"/>
    <lineage>
        <taxon>Bacteria</taxon>
        <taxon>Pseudomonadati</taxon>
        <taxon>Pseudomonadota</taxon>
        <taxon>Gammaproteobacteria</taxon>
        <taxon>Pseudomonadales</taxon>
        <taxon>Marinobacteraceae</taxon>
        <taxon>Marinobacter</taxon>
    </lineage>
</organism>
<sequence length="304" mass="35123">MNMTTYNLTHLKQLEAESIHIIREVAAEFDNPVMLYSIGKDSAVMLHLALKAFYPGKPPFPLLHVDTTWKFRDMISFRDHVAEKFGLDLIVHINEEGVKQGVGPFTHGSAKHTDIMKTQSLKQALNKYKFDAAFGGARRDEEKSRAKERVYSFRDEHHRWDPKNQRPELWNIYNGKVNKGESIRVFPLSNWTELDIWQYIYLENIDIVPLYYAAVRPVVERDGTLIMVDDDRMPLKEGEKPMMKSVRFRTLGCYPLTGAIESEANTLPDIIQEMLLATSSERQGRVIDHDSAGSMEQKKREGYF</sequence>
<protein>
    <recommendedName>
        <fullName evidence="1">Sulfate adenylyltransferase subunit 2 2</fullName>
        <ecNumber evidence="1">2.7.7.4</ecNumber>
    </recommendedName>
    <alternativeName>
        <fullName evidence="1">ATP-sulfurylase small subunit 2</fullName>
    </alternativeName>
    <alternativeName>
        <fullName evidence="1">Sulfate adenylate transferase 2</fullName>
        <shortName evidence="1">SAT 2</shortName>
    </alternativeName>
</protein>
<keyword id="KW-0067">ATP-binding</keyword>
<keyword id="KW-0547">Nucleotide-binding</keyword>
<keyword id="KW-0548">Nucleotidyltransferase</keyword>
<keyword id="KW-0808">Transferase</keyword>
<gene>
    <name evidence="1" type="primary">cysD2</name>
    <name type="ordered locus">Maqu_2734</name>
</gene>
<accession>A1U490</accession>
<name>CYSD2_MARN8</name>
<reference key="1">
    <citation type="journal article" date="2011" name="Appl. Environ. Microbiol.">
        <title>Genomic potential of Marinobacter aquaeolei, a biogeochemical 'opportunitroph'.</title>
        <authorList>
            <person name="Singer E."/>
            <person name="Webb E.A."/>
            <person name="Nelson W.C."/>
            <person name="Heidelberg J.F."/>
            <person name="Ivanova N."/>
            <person name="Pati A."/>
            <person name="Edwards K.J."/>
        </authorList>
    </citation>
    <scope>NUCLEOTIDE SEQUENCE [LARGE SCALE GENOMIC DNA]</scope>
    <source>
        <strain>ATCC 700491 / DSM 11845 / VT8</strain>
    </source>
</reference>
<feature type="chain" id="PRO_0000340201" description="Sulfate adenylyltransferase subunit 2 2">
    <location>
        <begin position="1"/>
        <end position="304"/>
    </location>
</feature>
<dbReference type="EC" id="2.7.7.4" evidence="1"/>
<dbReference type="EMBL" id="CP000514">
    <property type="protein sequence ID" value="ABM19809.1"/>
    <property type="molecule type" value="Genomic_DNA"/>
</dbReference>
<dbReference type="RefSeq" id="WP_011786179.1">
    <property type="nucleotide sequence ID" value="NC_008740.1"/>
</dbReference>
<dbReference type="SMR" id="A1U490"/>
<dbReference type="STRING" id="351348.Maqu_2734"/>
<dbReference type="KEGG" id="maq:Maqu_2734"/>
<dbReference type="eggNOG" id="COG0175">
    <property type="taxonomic scope" value="Bacteria"/>
</dbReference>
<dbReference type="HOGENOM" id="CLU_043026_0_0_6"/>
<dbReference type="UniPathway" id="UPA00140">
    <property type="reaction ID" value="UER00204"/>
</dbReference>
<dbReference type="Proteomes" id="UP000000998">
    <property type="component" value="Chromosome"/>
</dbReference>
<dbReference type="GO" id="GO:0005524">
    <property type="term" value="F:ATP binding"/>
    <property type="evidence" value="ECO:0007669"/>
    <property type="project" value="UniProtKB-KW"/>
</dbReference>
<dbReference type="GO" id="GO:0004781">
    <property type="term" value="F:sulfate adenylyltransferase (ATP) activity"/>
    <property type="evidence" value="ECO:0007669"/>
    <property type="project" value="UniProtKB-UniRule"/>
</dbReference>
<dbReference type="GO" id="GO:0070814">
    <property type="term" value="P:hydrogen sulfide biosynthetic process"/>
    <property type="evidence" value="ECO:0007669"/>
    <property type="project" value="UniProtKB-UniRule"/>
</dbReference>
<dbReference type="GO" id="GO:0000103">
    <property type="term" value="P:sulfate assimilation"/>
    <property type="evidence" value="ECO:0007669"/>
    <property type="project" value="UniProtKB-UniRule"/>
</dbReference>
<dbReference type="CDD" id="cd23946">
    <property type="entry name" value="Sulfate_adenylyltransferase_2"/>
    <property type="match status" value="1"/>
</dbReference>
<dbReference type="FunFam" id="3.40.50.620:FF:000002">
    <property type="entry name" value="Sulfate adenylyltransferase subunit 2"/>
    <property type="match status" value="1"/>
</dbReference>
<dbReference type="Gene3D" id="3.40.50.620">
    <property type="entry name" value="HUPs"/>
    <property type="match status" value="1"/>
</dbReference>
<dbReference type="HAMAP" id="MF_00064">
    <property type="entry name" value="Sulf_adenylyltr_sub2"/>
    <property type="match status" value="1"/>
</dbReference>
<dbReference type="InterPro" id="IPR002500">
    <property type="entry name" value="PAPS_reduct_dom"/>
</dbReference>
<dbReference type="InterPro" id="IPR014729">
    <property type="entry name" value="Rossmann-like_a/b/a_fold"/>
</dbReference>
<dbReference type="InterPro" id="IPR011784">
    <property type="entry name" value="SO4_adenylTrfase_ssu"/>
</dbReference>
<dbReference type="InterPro" id="IPR050128">
    <property type="entry name" value="Sulfate_adenylyltrnsfr_sub2"/>
</dbReference>
<dbReference type="NCBIfam" id="TIGR02039">
    <property type="entry name" value="CysD"/>
    <property type="match status" value="1"/>
</dbReference>
<dbReference type="NCBIfam" id="NF003587">
    <property type="entry name" value="PRK05253.1"/>
    <property type="match status" value="1"/>
</dbReference>
<dbReference type="NCBIfam" id="NF009214">
    <property type="entry name" value="PRK12563.1"/>
    <property type="match status" value="1"/>
</dbReference>
<dbReference type="PANTHER" id="PTHR43196">
    <property type="entry name" value="SULFATE ADENYLYLTRANSFERASE SUBUNIT 2"/>
    <property type="match status" value="1"/>
</dbReference>
<dbReference type="PANTHER" id="PTHR43196:SF1">
    <property type="entry name" value="SULFATE ADENYLYLTRANSFERASE SUBUNIT 2"/>
    <property type="match status" value="1"/>
</dbReference>
<dbReference type="Pfam" id="PF01507">
    <property type="entry name" value="PAPS_reduct"/>
    <property type="match status" value="1"/>
</dbReference>
<dbReference type="PIRSF" id="PIRSF002936">
    <property type="entry name" value="CysDAde_trans"/>
    <property type="match status" value="1"/>
</dbReference>
<dbReference type="SUPFAM" id="SSF52402">
    <property type="entry name" value="Adenine nucleotide alpha hydrolases-like"/>
    <property type="match status" value="1"/>
</dbReference>
<comment type="function">
    <text evidence="1">With CysN forms the ATP sulfurylase (ATPS) that catalyzes the adenylation of sulfate producing adenosine 5'-phosphosulfate (APS) and diphosphate, the first enzymatic step in sulfur assimilation pathway. APS synthesis involves the formation of a high-energy phosphoric-sulfuric acid anhydride bond driven by GTP hydrolysis by CysN coupled to ATP hydrolysis by CysD.</text>
</comment>
<comment type="catalytic activity">
    <reaction evidence="1">
        <text>sulfate + ATP + H(+) = adenosine 5'-phosphosulfate + diphosphate</text>
        <dbReference type="Rhea" id="RHEA:18133"/>
        <dbReference type="ChEBI" id="CHEBI:15378"/>
        <dbReference type="ChEBI" id="CHEBI:16189"/>
        <dbReference type="ChEBI" id="CHEBI:30616"/>
        <dbReference type="ChEBI" id="CHEBI:33019"/>
        <dbReference type="ChEBI" id="CHEBI:58243"/>
        <dbReference type="EC" id="2.7.7.4"/>
    </reaction>
</comment>
<comment type="pathway">
    <text evidence="1">Sulfur metabolism; hydrogen sulfide biosynthesis; sulfite from sulfate: step 1/3.</text>
</comment>
<comment type="subunit">
    <text evidence="1">Heterodimer composed of CysD, the smaller subunit, and CysN.</text>
</comment>
<comment type="similarity">
    <text evidence="1">Belongs to the PAPS reductase family. CysD subfamily.</text>
</comment>